<sequence length="167" mass="19298">MSLVIRNLQRVIPIRRAPLRSKIEIVRRILGVQKFDLGIICVDNKNIQHINRIYRDRNVPTDVLSFPFHEHLKAGEFPQPDFPDDYNLGDIFLGVEYIFHQCKENEDYNDVLTVTATHGLCHLLGFTHGTEAEWQQMFQKEKAVLDELGRRTGTRLQPLTRGLFGGS</sequence>
<evidence type="ECO:0000250" key="1">
    <source>
        <dbReference type="UniProtKB" id="P71335"/>
    </source>
</evidence>
<evidence type="ECO:0000269" key="2">
    <source>
    </source>
</evidence>
<evidence type="ECO:0000269" key="3">
    <source>
    </source>
</evidence>
<evidence type="ECO:0000303" key="4">
    <source>
    </source>
</evidence>
<evidence type="ECO:0000305" key="5"/>
<evidence type="ECO:0000305" key="6">
    <source>
    </source>
</evidence>
<evidence type="ECO:0000305" key="7">
    <source>
    </source>
</evidence>
<name>YBEY_HUMAN</name>
<gene>
    <name type="primary">YBEY</name>
    <name type="synonym">C21orf57</name>
</gene>
<keyword id="KW-0025">Alternative splicing</keyword>
<keyword id="KW-0255">Endonuclease</keyword>
<keyword id="KW-0378">Hydrolase</keyword>
<keyword id="KW-0479">Metal-binding</keyword>
<keyword id="KW-0540">Nuclease</keyword>
<keyword id="KW-0539">Nucleus</keyword>
<keyword id="KW-1267">Proteomics identification</keyword>
<keyword id="KW-1185">Reference proteome</keyword>
<keyword id="KW-0862">Zinc</keyword>
<organism>
    <name type="scientific">Homo sapiens</name>
    <name type="common">Human</name>
    <dbReference type="NCBI Taxonomy" id="9606"/>
    <lineage>
        <taxon>Eukaryota</taxon>
        <taxon>Metazoa</taxon>
        <taxon>Chordata</taxon>
        <taxon>Craniata</taxon>
        <taxon>Vertebrata</taxon>
        <taxon>Euteleostomi</taxon>
        <taxon>Mammalia</taxon>
        <taxon>Eutheria</taxon>
        <taxon>Euarchontoglires</taxon>
        <taxon>Primates</taxon>
        <taxon>Haplorrhini</taxon>
        <taxon>Catarrhini</taxon>
        <taxon>Hominidae</taxon>
        <taxon>Homo</taxon>
    </lineage>
</organism>
<dbReference type="EC" id="3.1.-.-" evidence="3"/>
<dbReference type="EMBL" id="AY040873">
    <property type="protein sequence ID" value="AAK74138.1"/>
    <property type="status" value="ALT_SEQ"/>
    <property type="molecule type" value="mRNA"/>
</dbReference>
<dbReference type="EMBL" id="AY040874">
    <property type="protein sequence ID" value="AAK74139.1"/>
    <property type="status" value="ALT_INIT"/>
    <property type="molecule type" value="mRNA"/>
</dbReference>
<dbReference type="EMBL" id="AY040875">
    <property type="protein sequence ID" value="AAK74140.1"/>
    <property type="status" value="ALT_SEQ"/>
    <property type="molecule type" value="mRNA"/>
</dbReference>
<dbReference type="EMBL" id="AY040876">
    <property type="protein sequence ID" value="AAK74141.1"/>
    <property type="status" value="ALT_SEQ"/>
    <property type="molecule type" value="mRNA"/>
</dbReference>
<dbReference type="EMBL" id="AP000471">
    <property type="status" value="NOT_ANNOTATED_CDS"/>
    <property type="molecule type" value="Genomic_DNA"/>
</dbReference>
<dbReference type="EMBL" id="CH471079">
    <property type="protein sequence ID" value="EAX09288.1"/>
    <property type="molecule type" value="Genomic_DNA"/>
</dbReference>
<dbReference type="EMBL" id="CH471079">
    <property type="protein sequence ID" value="EAX09290.1"/>
    <property type="molecule type" value="Genomic_DNA"/>
</dbReference>
<dbReference type="EMBL" id="CH471079">
    <property type="protein sequence ID" value="EAX09291.1"/>
    <property type="molecule type" value="Genomic_DNA"/>
</dbReference>
<dbReference type="EMBL" id="CH471079">
    <property type="protein sequence ID" value="EAX09293.1"/>
    <property type="molecule type" value="Genomic_DNA"/>
</dbReference>
<dbReference type="CCDS" id="CCDS33591.1">
    <molecule id="P58557-1"/>
</dbReference>
<dbReference type="CCDS" id="CCDS82685.1">
    <molecule id="P58557-3"/>
</dbReference>
<dbReference type="CCDS" id="CCDS82686.1">
    <molecule id="P58557-4"/>
</dbReference>
<dbReference type="CCDS" id="CCDS82687.1">
    <molecule id="P58557-2"/>
</dbReference>
<dbReference type="RefSeq" id="NP_001300951.1">
    <molecule id="P58557-2"/>
    <property type="nucleotide sequence ID" value="NM_001314022.2"/>
</dbReference>
<dbReference type="RefSeq" id="NP_001300952.1">
    <molecule id="P58557-3"/>
    <property type="nucleotide sequence ID" value="NM_001314023.2"/>
</dbReference>
<dbReference type="RefSeq" id="NP_001300953.1">
    <molecule id="P58557-4"/>
    <property type="nucleotide sequence ID" value="NM_001314024.2"/>
</dbReference>
<dbReference type="RefSeq" id="NP_001300954.1">
    <molecule id="P58557-1"/>
    <property type="nucleotide sequence ID" value="NM_001314025.2"/>
</dbReference>
<dbReference type="RefSeq" id="NP_001300955.1">
    <property type="nucleotide sequence ID" value="NM_001314026.1"/>
</dbReference>
<dbReference type="RefSeq" id="NP_478061.1">
    <molecule id="P58557-1"/>
    <property type="nucleotide sequence ID" value="NM_058181.3"/>
</dbReference>
<dbReference type="RefSeq" id="XP_005261213.3">
    <molecule id="P58557-2"/>
    <property type="nucleotide sequence ID" value="XM_005261156.5"/>
</dbReference>
<dbReference type="RefSeq" id="XP_047296858.1">
    <molecule id="P58557-1"/>
    <property type="nucleotide sequence ID" value="XM_047440902.1"/>
</dbReference>
<dbReference type="RefSeq" id="XP_047296859.1">
    <molecule id="P58557-2"/>
    <property type="nucleotide sequence ID" value="XM_047440903.1"/>
</dbReference>
<dbReference type="RefSeq" id="XP_054180639.1">
    <molecule id="P58557-1"/>
    <property type="nucleotide sequence ID" value="XM_054324664.1"/>
</dbReference>
<dbReference type="RefSeq" id="XP_054180641.1">
    <molecule id="P58557-2"/>
    <property type="nucleotide sequence ID" value="XM_054324666.1"/>
</dbReference>
<dbReference type="RefSeq" id="XP_054180642.1">
    <molecule id="P58557-2"/>
    <property type="nucleotide sequence ID" value="XM_054324667.1"/>
</dbReference>
<dbReference type="SMR" id="P58557"/>
<dbReference type="BioGRID" id="119869">
    <property type="interactions" value="155"/>
</dbReference>
<dbReference type="FunCoup" id="P58557">
    <property type="interactions" value="793"/>
</dbReference>
<dbReference type="IntAct" id="P58557">
    <property type="interactions" value="77"/>
</dbReference>
<dbReference type="MINT" id="P58557"/>
<dbReference type="STRING" id="9606.ENSP00000329614"/>
<dbReference type="GlyGen" id="P58557">
    <property type="glycosylation" value="1 site, 1 O-linked glycan (1 site)"/>
</dbReference>
<dbReference type="iPTMnet" id="P58557"/>
<dbReference type="PhosphoSitePlus" id="P58557"/>
<dbReference type="BioMuta" id="YBEY"/>
<dbReference type="DMDM" id="47117865"/>
<dbReference type="jPOST" id="P58557"/>
<dbReference type="MassIVE" id="P58557"/>
<dbReference type="PaxDb" id="9606-ENSP00000329614"/>
<dbReference type="PeptideAtlas" id="P58557"/>
<dbReference type="ProteomicsDB" id="57090">
    <molecule id="P58557-1"/>
</dbReference>
<dbReference type="ProteomicsDB" id="57091">
    <molecule id="P58557-2"/>
</dbReference>
<dbReference type="ProteomicsDB" id="57092">
    <molecule id="P58557-3"/>
</dbReference>
<dbReference type="ProteomicsDB" id="57093">
    <molecule id="P58557-4"/>
</dbReference>
<dbReference type="Pumba" id="P58557"/>
<dbReference type="TopDownProteomics" id="P58557-1">
    <molecule id="P58557-1"/>
</dbReference>
<dbReference type="TopDownProteomics" id="P58557-3">
    <molecule id="P58557-3"/>
</dbReference>
<dbReference type="Antibodypedia" id="10671">
    <property type="antibodies" value="36 antibodies from 10 providers"/>
</dbReference>
<dbReference type="DNASU" id="54059"/>
<dbReference type="Ensembl" id="ENST00000329319.7">
    <molecule id="P58557-1"/>
    <property type="protein sequence ID" value="ENSP00000329614.3"/>
    <property type="gene ID" value="ENSG00000182362.14"/>
</dbReference>
<dbReference type="Ensembl" id="ENST00000339195.10">
    <molecule id="P58557-2"/>
    <property type="protein sequence ID" value="ENSP00000340675.6"/>
    <property type="gene ID" value="ENSG00000182362.14"/>
</dbReference>
<dbReference type="Ensembl" id="ENST00000397691.1">
    <molecule id="P58557-1"/>
    <property type="protein sequence ID" value="ENSP00000380805.1"/>
    <property type="gene ID" value="ENSG00000182362.14"/>
</dbReference>
<dbReference type="Ensembl" id="ENST00000397692.5">
    <molecule id="P58557-4"/>
    <property type="protein sequence ID" value="ENSP00000380806.1"/>
    <property type="gene ID" value="ENSG00000182362.14"/>
</dbReference>
<dbReference type="Ensembl" id="ENST00000397694.5">
    <molecule id="P58557-3"/>
    <property type="protein sequence ID" value="ENSP00000380808.1"/>
    <property type="gene ID" value="ENSG00000182362.14"/>
</dbReference>
<dbReference type="Ensembl" id="ENST00000397701.9">
    <molecule id="P58557-1"/>
    <property type="protein sequence ID" value="ENSP00000380813.4"/>
    <property type="gene ID" value="ENSG00000182362.14"/>
</dbReference>
<dbReference type="GeneID" id="54059"/>
<dbReference type="KEGG" id="hsa:54059"/>
<dbReference type="MANE-Select" id="ENST00000397701.9">
    <property type="protein sequence ID" value="ENSP00000380813.4"/>
    <property type="RefSeq nucleotide sequence ID" value="NM_001314025.2"/>
    <property type="RefSeq protein sequence ID" value="NP_001300954.1"/>
</dbReference>
<dbReference type="UCSC" id="uc002ziv.4">
    <molecule id="P58557-1"/>
    <property type="organism name" value="human"/>
</dbReference>
<dbReference type="AGR" id="HGNC:1299"/>
<dbReference type="CTD" id="54059"/>
<dbReference type="DisGeNET" id="54059"/>
<dbReference type="GeneCards" id="YBEY"/>
<dbReference type="HGNC" id="HGNC:1299">
    <property type="gene designation" value="YBEY"/>
</dbReference>
<dbReference type="HPA" id="ENSG00000182362">
    <property type="expression patterns" value="Tissue enhanced (testis)"/>
</dbReference>
<dbReference type="MIM" id="617461">
    <property type="type" value="gene"/>
</dbReference>
<dbReference type="neXtProt" id="NX_P58557"/>
<dbReference type="OpenTargets" id="ENSG00000182362"/>
<dbReference type="PharmGKB" id="PA25852"/>
<dbReference type="VEuPathDB" id="HostDB:ENSG00000182362"/>
<dbReference type="eggNOG" id="ENOG502R6QZ">
    <property type="taxonomic scope" value="Eukaryota"/>
</dbReference>
<dbReference type="GeneTree" id="ENSGT00950000183170"/>
<dbReference type="HOGENOM" id="CLU_106710_4_0_1"/>
<dbReference type="InParanoid" id="P58557"/>
<dbReference type="OMA" id="GFTHNSE"/>
<dbReference type="OrthoDB" id="27226at2759"/>
<dbReference type="PAN-GO" id="P58557">
    <property type="GO annotations" value="2 GO annotations based on evolutionary models"/>
</dbReference>
<dbReference type="PhylomeDB" id="P58557"/>
<dbReference type="TreeFam" id="TF332551"/>
<dbReference type="PathwayCommons" id="P58557"/>
<dbReference type="SignaLink" id="P58557"/>
<dbReference type="BioGRID-ORCS" id="54059">
    <property type="hits" value="104 hits in 1166 CRISPR screens"/>
</dbReference>
<dbReference type="ChiTaRS" id="YBEY">
    <property type="organism name" value="human"/>
</dbReference>
<dbReference type="GenomeRNAi" id="54059"/>
<dbReference type="Pharos" id="P58557">
    <property type="development level" value="Tdark"/>
</dbReference>
<dbReference type="PRO" id="PR:P58557"/>
<dbReference type="Proteomes" id="UP000005640">
    <property type="component" value="Chromosome 21"/>
</dbReference>
<dbReference type="RNAct" id="P58557">
    <property type="molecule type" value="protein"/>
</dbReference>
<dbReference type="Bgee" id="ENSG00000182362">
    <property type="expression patterns" value="Expressed in left testis and 190 other cell types or tissues"/>
</dbReference>
<dbReference type="GO" id="GO:0005739">
    <property type="term" value="C:mitochondrion"/>
    <property type="evidence" value="ECO:0006056"/>
    <property type="project" value="FlyBase"/>
</dbReference>
<dbReference type="GO" id="GO:0005634">
    <property type="term" value="C:nucleus"/>
    <property type="evidence" value="ECO:0000314"/>
    <property type="project" value="UniProtKB"/>
</dbReference>
<dbReference type="GO" id="GO:0046872">
    <property type="term" value="F:metal ion binding"/>
    <property type="evidence" value="ECO:0007669"/>
    <property type="project" value="UniProtKB-KW"/>
</dbReference>
<dbReference type="GO" id="GO:0004222">
    <property type="term" value="F:metalloendopeptidase activity"/>
    <property type="evidence" value="ECO:0007669"/>
    <property type="project" value="InterPro"/>
</dbReference>
<dbReference type="GO" id="GO:0004521">
    <property type="term" value="F:RNA endonuclease activity"/>
    <property type="evidence" value="ECO:0000314"/>
    <property type="project" value="UniProtKB"/>
</dbReference>
<dbReference type="GO" id="GO:0006364">
    <property type="term" value="P:rRNA processing"/>
    <property type="evidence" value="ECO:0007669"/>
    <property type="project" value="InterPro"/>
</dbReference>
<dbReference type="FunFam" id="3.40.390.30:FF:000003">
    <property type="entry name" value="YBEY isoform 1"/>
    <property type="match status" value="1"/>
</dbReference>
<dbReference type="Gene3D" id="3.40.390.30">
    <property type="entry name" value="Metalloproteases ('zincins'), catalytic domain"/>
    <property type="match status" value="1"/>
</dbReference>
<dbReference type="HAMAP" id="MF_00009">
    <property type="entry name" value="Endoribonucl_YbeY"/>
    <property type="match status" value="1"/>
</dbReference>
<dbReference type="InterPro" id="IPR023091">
    <property type="entry name" value="MetalPrtase_cat_dom_sf_prd"/>
</dbReference>
<dbReference type="InterPro" id="IPR002036">
    <property type="entry name" value="YbeY"/>
</dbReference>
<dbReference type="InterPro" id="IPR020549">
    <property type="entry name" value="YbeY_CS"/>
</dbReference>
<dbReference type="NCBIfam" id="TIGR00043">
    <property type="entry name" value="rRNA maturation RNase YbeY"/>
    <property type="match status" value="1"/>
</dbReference>
<dbReference type="PANTHER" id="PTHR46986">
    <property type="entry name" value="ENDORIBONUCLEASE YBEY, CHLOROPLASTIC"/>
    <property type="match status" value="1"/>
</dbReference>
<dbReference type="PANTHER" id="PTHR46986:SF1">
    <property type="entry name" value="ENDORIBONUCLEASE YBEY, CHLOROPLASTIC"/>
    <property type="match status" value="1"/>
</dbReference>
<dbReference type="Pfam" id="PF02130">
    <property type="entry name" value="YbeY"/>
    <property type="match status" value="1"/>
</dbReference>
<dbReference type="SUPFAM" id="SSF55486">
    <property type="entry name" value="Metalloproteases ('zincins'), catalytic domain"/>
    <property type="match status" value="1"/>
</dbReference>
<dbReference type="PROSITE" id="PS01306">
    <property type="entry name" value="UPF0054"/>
    <property type="match status" value="1"/>
</dbReference>
<proteinExistence type="evidence at protein level"/>
<reference key="1">
    <citation type="journal article" date="2001" name="Genomics">
        <title>From PREDs and open reading frames to cDNA isolation: revisiting the human chromosome 21 transcription map.</title>
        <authorList>
            <person name="Reymond A."/>
            <person name="Friedli M."/>
            <person name="Neergaard Henrichsen C."/>
            <person name="Chapot F."/>
            <person name="Deutsch S."/>
            <person name="Ucla C."/>
            <person name="Rossier C."/>
            <person name="Lyle R."/>
            <person name="Guipponi M."/>
            <person name="Antonarakis S.E."/>
        </authorList>
    </citation>
    <scope>NUCLEOTIDE SEQUENCE [MRNA] (ISOFORMS A; B; C AND D)</scope>
</reference>
<reference key="2">
    <citation type="journal article" date="2000" name="Nature">
        <title>The DNA sequence of human chromosome 21.</title>
        <authorList>
            <person name="Hattori M."/>
            <person name="Fujiyama A."/>
            <person name="Taylor T.D."/>
            <person name="Watanabe H."/>
            <person name="Yada T."/>
            <person name="Park H.-S."/>
            <person name="Toyoda A."/>
            <person name="Ishii K."/>
            <person name="Totoki Y."/>
            <person name="Choi D.-K."/>
            <person name="Groner Y."/>
            <person name="Soeda E."/>
            <person name="Ohki M."/>
            <person name="Takagi T."/>
            <person name="Sakaki Y."/>
            <person name="Taudien S."/>
            <person name="Blechschmidt K."/>
            <person name="Polley A."/>
            <person name="Menzel U."/>
            <person name="Delabar J."/>
            <person name="Kumpf K."/>
            <person name="Lehmann R."/>
            <person name="Patterson D."/>
            <person name="Reichwald K."/>
            <person name="Rump A."/>
            <person name="Schillhabel M."/>
            <person name="Schudy A."/>
            <person name="Zimmermann W."/>
            <person name="Rosenthal A."/>
            <person name="Kudoh J."/>
            <person name="Shibuya K."/>
            <person name="Kawasaki K."/>
            <person name="Asakawa S."/>
            <person name="Shintani A."/>
            <person name="Sasaki T."/>
            <person name="Nagamine K."/>
            <person name="Mitsuyama S."/>
            <person name="Antonarakis S.E."/>
            <person name="Minoshima S."/>
            <person name="Shimizu N."/>
            <person name="Nordsiek G."/>
            <person name="Hornischer K."/>
            <person name="Brandt P."/>
            <person name="Scharfe M."/>
            <person name="Schoen O."/>
            <person name="Desario A."/>
            <person name="Reichelt J."/>
            <person name="Kauer G."/>
            <person name="Bloecker H."/>
            <person name="Ramser J."/>
            <person name="Beck A."/>
            <person name="Klages S."/>
            <person name="Hennig S."/>
            <person name="Riesselmann L."/>
            <person name="Dagand E."/>
            <person name="Wehrmeyer S."/>
            <person name="Borzym K."/>
            <person name="Gardiner K."/>
            <person name="Nizetic D."/>
            <person name="Francis F."/>
            <person name="Lehrach H."/>
            <person name="Reinhardt R."/>
            <person name="Yaspo M.-L."/>
        </authorList>
    </citation>
    <scope>NUCLEOTIDE SEQUENCE [LARGE SCALE GENOMIC DNA]</scope>
</reference>
<reference key="3">
    <citation type="submission" date="2005-09" db="EMBL/GenBank/DDBJ databases">
        <authorList>
            <person name="Mural R.J."/>
            <person name="Istrail S."/>
            <person name="Sutton G.G."/>
            <person name="Florea L."/>
            <person name="Halpern A.L."/>
            <person name="Mobarry C.M."/>
            <person name="Lippert R."/>
            <person name="Walenz B."/>
            <person name="Shatkay H."/>
            <person name="Dew I."/>
            <person name="Miller J.R."/>
            <person name="Flanigan M.J."/>
            <person name="Edwards N.J."/>
            <person name="Bolanos R."/>
            <person name="Fasulo D."/>
            <person name="Halldorsson B.V."/>
            <person name="Hannenhalli S."/>
            <person name="Turner R."/>
            <person name="Yooseph S."/>
            <person name="Lu F."/>
            <person name="Nusskern D.R."/>
            <person name="Shue B.C."/>
            <person name="Zheng X.H."/>
            <person name="Zhong F."/>
            <person name="Delcher A.L."/>
            <person name="Huson D.H."/>
            <person name="Kravitz S.A."/>
            <person name="Mouchard L."/>
            <person name="Reinert K."/>
            <person name="Remington K.A."/>
            <person name="Clark A.G."/>
            <person name="Waterman M.S."/>
            <person name="Eichler E.E."/>
            <person name="Adams M.D."/>
            <person name="Hunkapiller M.W."/>
            <person name="Myers E.W."/>
            <person name="Venter J.C."/>
        </authorList>
    </citation>
    <scope>NUCLEOTIDE SEQUENCE [LARGE SCALE GENOMIC DNA]</scope>
</reference>
<reference key="4">
    <citation type="journal article" date="2011" name="BMC Syst. Biol.">
        <title>Initial characterization of the human central proteome.</title>
        <authorList>
            <person name="Burkard T.R."/>
            <person name="Planyavsky M."/>
            <person name="Kaupe I."/>
            <person name="Breitwieser F.P."/>
            <person name="Buerckstuemmer T."/>
            <person name="Bennett K.L."/>
            <person name="Superti-Furga G."/>
            <person name="Colinge J."/>
        </authorList>
    </citation>
    <scope>IDENTIFICATION BY MASS SPECTROMETRY [LARGE SCALE ANALYSIS]</scope>
</reference>
<reference key="5">
    <citation type="journal article" date="2012" name="Mol. Cell. Proteomics">
        <title>Antibody-based protein profiling of the human chromosome 21.</title>
        <authorList>
            <person name="Uhlen M."/>
            <person name="Oksvold P."/>
            <person name="Algenas C."/>
            <person name="Hamsten C."/>
            <person name="Fagerberg L."/>
            <person name="Klevebring D."/>
            <person name="Lundberg E."/>
            <person name="Odeberg J."/>
            <person name="Ponten F."/>
            <person name="Kondo T."/>
            <person name="Sivertsson A."/>
        </authorList>
    </citation>
    <scope>SUBCELLULAR LOCATION</scope>
    <scope>MISCELLANEOUS</scope>
</reference>
<reference key="6">
    <citation type="journal article" date="2017" name="Biochem. Biophys. Res. Commun.">
        <title>C21orf57 is a human homologue of bacterial YbeY proteins.</title>
        <authorList>
            <person name="Ghosal A."/>
            <person name="Koehrer C."/>
            <person name="Babu V.M."/>
            <person name="Yamanaka K."/>
            <person name="Davies B.W."/>
            <person name="Jacob A.I."/>
            <person name="Ferullo D.J."/>
            <person name="Gruber C.C."/>
            <person name="Vercruysse M."/>
            <person name="Walker G.C."/>
        </authorList>
    </citation>
    <scope>POSSIBLE FUNCTION</scope>
    <scope>MUTAGENESIS OF ARG-55; ASP-90 AND HIS-118</scope>
</reference>
<accession>P58557</accession>
<accession>B7WPA9</accession>
<accession>B7WPF7</accession>
<accession>D3DSN2</accession>
<protein>
    <recommendedName>
        <fullName evidence="5">Endoribonuclease YbeY</fullName>
        <ecNumber evidence="3">3.1.-.-</ecNumber>
    </recommendedName>
</protein>
<comment type="function">
    <text evidence="7">Single strand-specific metallo-endoribonuclease involved in rRNA maturation.</text>
</comment>
<comment type="cofactor">
    <cofactor evidence="1">
        <name>Zn(2+)</name>
        <dbReference type="ChEBI" id="CHEBI:29105"/>
    </cofactor>
    <text evidence="1">Binds 1 zinc ion.</text>
</comment>
<comment type="subcellular location">
    <subcellularLocation>
        <location evidence="2">Nucleus</location>
    </subcellularLocation>
</comment>
<comment type="alternative products">
    <event type="alternative splicing"/>
    <isoform>
        <id>P58557-1</id>
        <name>A</name>
        <sequence type="displayed"/>
    </isoform>
    <isoform>
        <id>P58557-2</id>
        <name>B</name>
        <sequence type="described" ref="VSP_006723"/>
    </isoform>
    <isoform>
        <id>P58557-3</id>
        <name>C</name>
        <sequence type="described" ref="VSP_006721"/>
    </isoform>
    <isoform>
        <id>P58557-4</id>
        <name>D</name>
        <sequence type="described" ref="VSP_006722"/>
    </isoform>
</comment>
<comment type="miscellaneous">
    <text evidence="6">A protein of the expected size has been detected by antibody binding and Western blot in at least one of the analyzed tissues or cells.</text>
</comment>
<comment type="similarity">
    <text evidence="5">Belongs to the endoribonuclease YbeY family.</text>
</comment>
<comment type="sequence caution" evidence="5">
    <conflict type="erroneous translation">
        <sequence resource="EMBL-CDS" id="AAK74138"/>
    </conflict>
    <text>Wrong choice of CDS.</text>
</comment>
<comment type="sequence caution" evidence="5">
    <conflict type="erroneous initiation">
        <sequence resource="EMBL-CDS" id="AAK74139"/>
    </conflict>
    <text>Extended N-terminus.</text>
</comment>
<comment type="sequence caution" evidence="5">
    <conflict type="erroneous translation">
        <sequence resource="EMBL-CDS" id="AAK74140"/>
    </conflict>
    <text>Wrong choice of CDS.</text>
</comment>
<comment type="sequence caution" evidence="5">
    <conflict type="erroneous translation">
        <sequence resource="EMBL-CDS" id="AAK74141"/>
    </conflict>
    <text>Wrong choice of CDS.</text>
</comment>
<feature type="chain" id="PRO_0000102578" description="Endoribonuclease YbeY">
    <location>
        <begin position="1"/>
        <end position="167"/>
    </location>
</feature>
<feature type="binding site" evidence="1">
    <location>
        <position position="118"/>
    </location>
    <ligand>
        <name>Zn(2+)</name>
        <dbReference type="ChEBI" id="CHEBI:29105"/>
        <note>catalytic</note>
    </ligand>
</feature>
<feature type="binding site" evidence="1">
    <location>
        <position position="122"/>
    </location>
    <ligand>
        <name>Zn(2+)</name>
        <dbReference type="ChEBI" id="CHEBI:29105"/>
        <note>catalytic</note>
    </ligand>
</feature>
<feature type="binding site" evidence="1">
    <location>
        <position position="128"/>
    </location>
    <ligand>
        <name>Zn(2+)</name>
        <dbReference type="ChEBI" id="CHEBI:29105"/>
        <note>catalytic</note>
    </ligand>
</feature>
<feature type="splice variant" id="VSP_006722" description="In isoform D." evidence="4">
    <location>
        <begin position="26"/>
        <end position="113"/>
    </location>
</feature>
<feature type="splice variant" id="VSP_006721" description="In isoform C." evidence="4">
    <location>
        <begin position="26"/>
        <end position="70"/>
    </location>
</feature>
<feature type="splice variant" id="VSP_006723" description="In isoform B." evidence="4">
    <location>
        <begin position="71"/>
        <end position="113"/>
    </location>
</feature>
<feature type="mutagenesis site" description="No endonuclease activity." evidence="3">
    <original>R</original>
    <variation>E</variation>
    <location>
        <position position="55"/>
    </location>
</feature>
<feature type="mutagenesis site" description="No endonuclease activity." evidence="3">
    <original>D</original>
    <variation>R</variation>
    <location>
        <position position="90"/>
    </location>
</feature>
<feature type="mutagenesis site" description="No endonuclease activity." evidence="3">
    <original>H</original>
    <variation>A</variation>
    <location>
        <position position="118"/>
    </location>
</feature>